<dbReference type="EC" id="6.1.1.22" evidence="1"/>
<dbReference type="EMBL" id="AE017308">
    <property type="protein sequence ID" value="AAT27993.1"/>
    <property type="molecule type" value="Genomic_DNA"/>
</dbReference>
<dbReference type="RefSeq" id="WP_011265027.1">
    <property type="nucleotide sequence ID" value="NC_006908.1"/>
</dbReference>
<dbReference type="SMR" id="Q6KHD7"/>
<dbReference type="STRING" id="267748.MMOB5070"/>
<dbReference type="KEGG" id="mmo:MMOB5070"/>
<dbReference type="eggNOG" id="COG0017">
    <property type="taxonomic scope" value="Bacteria"/>
</dbReference>
<dbReference type="HOGENOM" id="CLU_004553_2_0_14"/>
<dbReference type="OrthoDB" id="9762036at2"/>
<dbReference type="Proteomes" id="UP000009072">
    <property type="component" value="Chromosome"/>
</dbReference>
<dbReference type="GO" id="GO:0005737">
    <property type="term" value="C:cytoplasm"/>
    <property type="evidence" value="ECO:0007669"/>
    <property type="project" value="UniProtKB-SubCell"/>
</dbReference>
<dbReference type="GO" id="GO:0004816">
    <property type="term" value="F:asparagine-tRNA ligase activity"/>
    <property type="evidence" value="ECO:0007669"/>
    <property type="project" value="UniProtKB-UniRule"/>
</dbReference>
<dbReference type="GO" id="GO:0005524">
    <property type="term" value="F:ATP binding"/>
    <property type="evidence" value="ECO:0007669"/>
    <property type="project" value="UniProtKB-UniRule"/>
</dbReference>
<dbReference type="GO" id="GO:0003676">
    <property type="term" value="F:nucleic acid binding"/>
    <property type="evidence" value="ECO:0007669"/>
    <property type="project" value="InterPro"/>
</dbReference>
<dbReference type="GO" id="GO:0006421">
    <property type="term" value="P:asparaginyl-tRNA aminoacylation"/>
    <property type="evidence" value="ECO:0007669"/>
    <property type="project" value="UniProtKB-UniRule"/>
</dbReference>
<dbReference type="CDD" id="cd04318">
    <property type="entry name" value="EcAsnRS_like_N"/>
    <property type="match status" value="1"/>
</dbReference>
<dbReference type="FunFam" id="3.30.930.10:FF:000016">
    <property type="entry name" value="Asparagine--tRNA ligase"/>
    <property type="match status" value="1"/>
</dbReference>
<dbReference type="Gene3D" id="3.30.930.10">
    <property type="entry name" value="Bira Bifunctional Protein, Domain 2"/>
    <property type="match status" value="1"/>
</dbReference>
<dbReference type="Gene3D" id="2.40.50.140">
    <property type="entry name" value="Nucleic acid-binding proteins"/>
    <property type="match status" value="1"/>
</dbReference>
<dbReference type="HAMAP" id="MF_00534">
    <property type="entry name" value="Asn_tRNA_synth"/>
    <property type="match status" value="1"/>
</dbReference>
<dbReference type="InterPro" id="IPR004364">
    <property type="entry name" value="Aa-tRNA-synt_II"/>
</dbReference>
<dbReference type="InterPro" id="IPR006195">
    <property type="entry name" value="aa-tRNA-synth_II"/>
</dbReference>
<dbReference type="InterPro" id="IPR045864">
    <property type="entry name" value="aa-tRNA-synth_II/BPL/LPL"/>
</dbReference>
<dbReference type="InterPro" id="IPR004522">
    <property type="entry name" value="Asn-tRNA-ligase"/>
</dbReference>
<dbReference type="InterPro" id="IPR002312">
    <property type="entry name" value="Asp/Asn-tRNA-synth_IIb"/>
</dbReference>
<dbReference type="InterPro" id="IPR012340">
    <property type="entry name" value="NA-bd_OB-fold"/>
</dbReference>
<dbReference type="InterPro" id="IPR004365">
    <property type="entry name" value="NA-bd_OB_tRNA"/>
</dbReference>
<dbReference type="NCBIfam" id="TIGR00457">
    <property type="entry name" value="asnS"/>
    <property type="match status" value="1"/>
</dbReference>
<dbReference type="NCBIfam" id="NF003037">
    <property type="entry name" value="PRK03932.1"/>
    <property type="match status" value="1"/>
</dbReference>
<dbReference type="PANTHER" id="PTHR22594:SF34">
    <property type="entry name" value="ASPARAGINE--TRNA LIGASE, MITOCHONDRIAL-RELATED"/>
    <property type="match status" value="1"/>
</dbReference>
<dbReference type="PANTHER" id="PTHR22594">
    <property type="entry name" value="ASPARTYL/LYSYL-TRNA SYNTHETASE"/>
    <property type="match status" value="1"/>
</dbReference>
<dbReference type="Pfam" id="PF00152">
    <property type="entry name" value="tRNA-synt_2"/>
    <property type="match status" value="1"/>
</dbReference>
<dbReference type="Pfam" id="PF01336">
    <property type="entry name" value="tRNA_anti-codon"/>
    <property type="match status" value="1"/>
</dbReference>
<dbReference type="PRINTS" id="PR01042">
    <property type="entry name" value="TRNASYNTHASP"/>
</dbReference>
<dbReference type="SUPFAM" id="SSF55681">
    <property type="entry name" value="Class II aaRS and biotin synthetases"/>
    <property type="match status" value="1"/>
</dbReference>
<dbReference type="SUPFAM" id="SSF50249">
    <property type="entry name" value="Nucleic acid-binding proteins"/>
    <property type="match status" value="1"/>
</dbReference>
<dbReference type="PROSITE" id="PS50862">
    <property type="entry name" value="AA_TRNA_LIGASE_II"/>
    <property type="match status" value="1"/>
</dbReference>
<protein>
    <recommendedName>
        <fullName evidence="1">Asparagine--tRNA ligase</fullName>
        <ecNumber evidence="1">6.1.1.22</ecNumber>
    </recommendedName>
    <alternativeName>
        <fullName evidence="1">Asparaginyl-tRNA synthetase</fullName>
        <shortName evidence="1">AsnRS</shortName>
    </alternativeName>
</protein>
<evidence type="ECO:0000255" key="1">
    <source>
        <dbReference type="HAMAP-Rule" id="MF_00534"/>
    </source>
</evidence>
<organism>
    <name type="scientific">Mycoplasma mobile (strain ATCC 43663 / 163K / NCTC 11711)</name>
    <name type="common">Mesomycoplasma mobile</name>
    <dbReference type="NCBI Taxonomy" id="267748"/>
    <lineage>
        <taxon>Bacteria</taxon>
        <taxon>Bacillati</taxon>
        <taxon>Mycoplasmatota</taxon>
        <taxon>Mycoplasmoidales</taxon>
        <taxon>Metamycoplasmataceae</taxon>
        <taxon>Mesomycoplasma</taxon>
    </lineage>
</organism>
<proteinExistence type="inferred from homology"/>
<keyword id="KW-0030">Aminoacyl-tRNA synthetase</keyword>
<keyword id="KW-0067">ATP-binding</keyword>
<keyword id="KW-0963">Cytoplasm</keyword>
<keyword id="KW-0436">Ligase</keyword>
<keyword id="KW-0547">Nucleotide-binding</keyword>
<keyword id="KW-0648">Protein biosynthesis</keyword>
<keyword id="KW-1185">Reference proteome</keyword>
<gene>
    <name evidence="1" type="primary">asnS</name>
    <name type="ordered locus">MMOB5070</name>
</gene>
<sequence length="447" mass="51588">MTSIKHLLINAKKYDQKEFEIKAWVASNRGNTNIRFVEINDGSTIKNLQVVIKKEIMSFLEVDKIRLGAAIHVKGVLKYTPGMAQEIELNADKFILLKNTDEDFPIQKKETSLEALREIPHLRHRTTTLRAIMLIRSTLALEIHKFYNERGYLWVSSPIITGNDGEGAGESFVVDDESKDFFFNKKATLGVTGQLHAEAYALGFSKVYTFAPTFRAENSNTTKHAAEFWMMEPEVAFFDLKDLIKMSDDMLRQVIKRTVEAHPHEFEFFEKNKPGLLKNLNLFLNNKLSILEYREAIKILEKVKDRFEDKNIFFGKDLATEHEKYLAEKHIQGPVAVINYPKSFKAFYMFQNEDNETVAAYDLLVPGIGEVIGGSKRETRYEKLVQRVKDLKINQEDLQWYLDLRRFGQASSAGFGLGFERLIMYITGTENIRDTIPFPRTPKNMKM</sequence>
<reference key="1">
    <citation type="journal article" date="2004" name="Genome Res.">
        <title>The complete genome and proteome of Mycoplasma mobile.</title>
        <authorList>
            <person name="Jaffe J.D."/>
            <person name="Stange-Thomann N."/>
            <person name="Smith C."/>
            <person name="DeCaprio D."/>
            <person name="Fisher S."/>
            <person name="Butler J."/>
            <person name="Calvo S."/>
            <person name="Elkins T."/>
            <person name="FitzGerald M.G."/>
            <person name="Hafez N."/>
            <person name="Kodira C.D."/>
            <person name="Major J."/>
            <person name="Wang S."/>
            <person name="Wilkinson J."/>
            <person name="Nicol R."/>
            <person name="Nusbaum C."/>
            <person name="Birren B."/>
            <person name="Berg H.C."/>
            <person name="Church G.M."/>
        </authorList>
    </citation>
    <scope>NUCLEOTIDE SEQUENCE [LARGE SCALE GENOMIC DNA]</scope>
    <source>
        <strain>ATCC 43663 / NCTC 11711 / 163 K</strain>
    </source>
</reference>
<accession>Q6KHD7</accession>
<comment type="catalytic activity">
    <reaction evidence="1">
        <text>tRNA(Asn) + L-asparagine + ATP = L-asparaginyl-tRNA(Asn) + AMP + diphosphate + H(+)</text>
        <dbReference type="Rhea" id="RHEA:11180"/>
        <dbReference type="Rhea" id="RHEA-COMP:9659"/>
        <dbReference type="Rhea" id="RHEA-COMP:9674"/>
        <dbReference type="ChEBI" id="CHEBI:15378"/>
        <dbReference type="ChEBI" id="CHEBI:30616"/>
        <dbReference type="ChEBI" id="CHEBI:33019"/>
        <dbReference type="ChEBI" id="CHEBI:58048"/>
        <dbReference type="ChEBI" id="CHEBI:78442"/>
        <dbReference type="ChEBI" id="CHEBI:78515"/>
        <dbReference type="ChEBI" id="CHEBI:456215"/>
        <dbReference type="EC" id="6.1.1.22"/>
    </reaction>
</comment>
<comment type="subunit">
    <text evidence="1">Homodimer.</text>
</comment>
<comment type="subcellular location">
    <subcellularLocation>
        <location evidence="1">Cytoplasm</location>
    </subcellularLocation>
</comment>
<comment type="similarity">
    <text evidence="1">Belongs to the class-II aminoacyl-tRNA synthetase family.</text>
</comment>
<name>SYN_MYCM1</name>
<feature type="chain" id="PRO_0000176430" description="Asparagine--tRNA ligase">
    <location>
        <begin position="1"/>
        <end position="447"/>
    </location>
</feature>